<name>YTES_BACSU</name>
<reference key="1">
    <citation type="journal article" date="1997" name="Microbiology">
        <title>Sequencing and functional annotation of the Bacillus subtilis genes in the 200 kb rrnB-dnaB region.</title>
        <authorList>
            <person name="Lapidus A."/>
            <person name="Galleron N."/>
            <person name="Sorokin A."/>
            <person name="Ehrlich S.D."/>
        </authorList>
    </citation>
    <scope>NUCLEOTIDE SEQUENCE [GENOMIC DNA]</scope>
</reference>
<reference key="2">
    <citation type="journal article" date="1997" name="Nature">
        <title>The complete genome sequence of the Gram-positive bacterium Bacillus subtilis.</title>
        <authorList>
            <person name="Kunst F."/>
            <person name="Ogasawara N."/>
            <person name="Moszer I."/>
            <person name="Albertini A.M."/>
            <person name="Alloni G."/>
            <person name="Azevedo V."/>
            <person name="Bertero M.G."/>
            <person name="Bessieres P."/>
            <person name="Bolotin A."/>
            <person name="Borchert S."/>
            <person name="Borriss R."/>
            <person name="Boursier L."/>
            <person name="Brans A."/>
            <person name="Braun M."/>
            <person name="Brignell S.C."/>
            <person name="Bron S."/>
            <person name="Brouillet S."/>
            <person name="Bruschi C.V."/>
            <person name="Caldwell B."/>
            <person name="Capuano V."/>
            <person name="Carter N.M."/>
            <person name="Choi S.-K."/>
            <person name="Codani J.-J."/>
            <person name="Connerton I.F."/>
            <person name="Cummings N.J."/>
            <person name="Daniel R.A."/>
            <person name="Denizot F."/>
            <person name="Devine K.M."/>
            <person name="Duesterhoeft A."/>
            <person name="Ehrlich S.D."/>
            <person name="Emmerson P.T."/>
            <person name="Entian K.-D."/>
            <person name="Errington J."/>
            <person name="Fabret C."/>
            <person name="Ferrari E."/>
            <person name="Foulger D."/>
            <person name="Fritz C."/>
            <person name="Fujita M."/>
            <person name="Fujita Y."/>
            <person name="Fuma S."/>
            <person name="Galizzi A."/>
            <person name="Galleron N."/>
            <person name="Ghim S.-Y."/>
            <person name="Glaser P."/>
            <person name="Goffeau A."/>
            <person name="Golightly E.J."/>
            <person name="Grandi G."/>
            <person name="Guiseppi G."/>
            <person name="Guy B.J."/>
            <person name="Haga K."/>
            <person name="Haiech J."/>
            <person name="Harwood C.R."/>
            <person name="Henaut A."/>
            <person name="Hilbert H."/>
            <person name="Holsappel S."/>
            <person name="Hosono S."/>
            <person name="Hullo M.-F."/>
            <person name="Itaya M."/>
            <person name="Jones L.-M."/>
            <person name="Joris B."/>
            <person name="Karamata D."/>
            <person name="Kasahara Y."/>
            <person name="Klaerr-Blanchard M."/>
            <person name="Klein C."/>
            <person name="Kobayashi Y."/>
            <person name="Koetter P."/>
            <person name="Koningstein G."/>
            <person name="Krogh S."/>
            <person name="Kumano M."/>
            <person name="Kurita K."/>
            <person name="Lapidus A."/>
            <person name="Lardinois S."/>
            <person name="Lauber J."/>
            <person name="Lazarevic V."/>
            <person name="Lee S.-M."/>
            <person name="Levine A."/>
            <person name="Liu H."/>
            <person name="Masuda S."/>
            <person name="Mauel C."/>
            <person name="Medigue C."/>
            <person name="Medina N."/>
            <person name="Mellado R.P."/>
            <person name="Mizuno M."/>
            <person name="Moestl D."/>
            <person name="Nakai S."/>
            <person name="Noback M."/>
            <person name="Noone D."/>
            <person name="O'Reilly M."/>
            <person name="Ogawa K."/>
            <person name="Ogiwara A."/>
            <person name="Oudega B."/>
            <person name="Park S.-H."/>
            <person name="Parro V."/>
            <person name="Pohl T.M."/>
            <person name="Portetelle D."/>
            <person name="Porwollik S."/>
            <person name="Prescott A.M."/>
            <person name="Presecan E."/>
            <person name="Pujic P."/>
            <person name="Purnelle B."/>
            <person name="Rapoport G."/>
            <person name="Rey M."/>
            <person name="Reynolds S."/>
            <person name="Rieger M."/>
            <person name="Rivolta C."/>
            <person name="Rocha E."/>
            <person name="Roche B."/>
            <person name="Rose M."/>
            <person name="Sadaie Y."/>
            <person name="Sato T."/>
            <person name="Scanlan E."/>
            <person name="Schleich S."/>
            <person name="Schroeter R."/>
            <person name="Scoffone F."/>
            <person name="Sekiguchi J."/>
            <person name="Sekowska A."/>
            <person name="Seror S.J."/>
            <person name="Serror P."/>
            <person name="Shin B.-S."/>
            <person name="Soldo B."/>
            <person name="Sorokin A."/>
            <person name="Tacconi E."/>
            <person name="Takagi T."/>
            <person name="Takahashi H."/>
            <person name="Takemaru K."/>
            <person name="Takeuchi M."/>
            <person name="Tamakoshi A."/>
            <person name="Tanaka T."/>
            <person name="Terpstra P."/>
            <person name="Tognoni A."/>
            <person name="Tosato V."/>
            <person name="Uchiyama S."/>
            <person name="Vandenbol M."/>
            <person name="Vannier F."/>
            <person name="Vassarotti A."/>
            <person name="Viari A."/>
            <person name="Wambutt R."/>
            <person name="Wedler E."/>
            <person name="Wedler H."/>
            <person name="Weitzenegger T."/>
            <person name="Winters P."/>
            <person name="Wipat A."/>
            <person name="Yamamoto H."/>
            <person name="Yamane K."/>
            <person name="Yasumoto K."/>
            <person name="Yata K."/>
            <person name="Yoshida K."/>
            <person name="Yoshikawa H.-F."/>
            <person name="Zumstein E."/>
            <person name="Yoshikawa H."/>
            <person name="Danchin A."/>
        </authorList>
    </citation>
    <scope>NUCLEOTIDE SEQUENCE [LARGE SCALE GENOMIC DNA]</scope>
    <source>
        <strain>168</strain>
    </source>
</reference>
<reference key="3">
    <citation type="journal article" date="2009" name="Microbiology">
        <title>From a consortium sequence to a unified sequence: the Bacillus subtilis 168 reference genome a decade later.</title>
        <authorList>
            <person name="Barbe V."/>
            <person name="Cruveiller S."/>
            <person name="Kunst F."/>
            <person name="Lenoble P."/>
            <person name="Meurice G."/>
            <person name="Sekowska A."/>
            <person name="Vallenet D."/>
            <person name="Wang T."/>
            <person name="Moszer I."/>
            <person name="Medigue C."/>
            <person name="Danchin A."/>
        </authorList>
    </citation>
    <scope>SEQUENCE REVISION</scope>
</reference>
<reference key="4">
    <citation type="journal article" date="2007" name="Appl. Environ. Microbiol.">
        <title>Plant cell wall degradation by saprophytic Bacillus subtilis strains: gene clusters responsible for rhamnogalacturonan depolymerization.</title>
        <authorList>
            <person name="Ochiai A."/>
            <person name="Itoh T."/>
            <person name="Kawamata A."/>
            <person name="Hashimoto W."/>
            <person name="Murata K."/>
        </authorList>
    </citation>
    <scope>INDUCTION</scope>
    <scope>FUNCTION</scope>
    <source>
        <strain>168</strain>
    </source>
</reference>
<gene>
    <name type="primary">yteS</name>
    <name type="ordered locus">BSU30110</name>
</gene>
<protein>
    <recommendedName>
        <fullName>Putative lipoprotein YteS</fullName>
    </recommendedName>
</protein>
<evidence type="ECO:0000255" key="1">
    <source>
        <dbReference type="PROSITE-ProRule" id="PRU00303"/>
    </source>
</evidence>
<evidence type="ECO:0000269" key="2">
    <source>
    </source>
</evidence>
<evidence type="ECO:0000305" key="3"/>
<feature type="signal peptide" evidence="1">
    <location>
        <begin position="1"/>
        <end position="20"/>
    </location>
</feature>
<feature type="chain" id="PRO_0000378076" description="Putative lipoprotein YteS">
    <location>
        <begin position="21"/>
        <end position="167"/>
    </location>
</feature>
<feature type="lipid moiety-binding region" description="N-palmitoyl cysteine" evidence="1">
    <location>
        <position position="21"/>
    </location>
</feature>
<feature type="lipid moiety-binding region" description="S-diacylglycerol cysteine" evidence="1">
    <location>
        <position position="21"/>
    </location>
</feature>
<comment type="function">
    <text evidence="2">May play a role in the degradation of type I rhamnogalacturonan derived from plant cell walls.</text>
</comment>
<comment type="subcellular location">
    <subcellularLocation>
        <location evidence="1">Cell membrane</location>
        <topology evidence="1">Lipid-anchor</topology>
    </subcellularLocation>
</comment>
<comment type="induction">
    <text evidence="2">Up-regulated by growth on type I rhamnogalacturonan.</text>
</comment>
<comment type="sequence caution" evidence="3">
    <conflict type="erroneous initiation">
        <sequence resource="EMBL-CDS" id="AAC00273"/>
    </conflict>
</comment>
<dbReference type="EMBL" id="AF008220">
    <property type="protein sequence ID" value="AAC00273.1"/>
    <property type="status" value="ALT_INIT"/>
    <property type="molecule type" value="Genomic_DNA"/>
</dbReference>
<dbReference type="EMBL" id="AL009126">
    <property type="protein sequence ID" value="CAB14989.2"/>
    <property type="molecule type" value="Genomic_DNA"/>
</dbReference>
<dbReference type="PIR" id="B69991">
    <property type="entry name" value="B69991"/>
</dbReference>
<dbReference type="FunCoup" id="C0SP80">
    <property type="interactions" value="46"/>
</dbReference>
<dbReference type="STRING" id="224308.BSU30110"/>
<dbReference type="PaxDb" id="224308-BSU30110"/>
<dbReference type="DNASU" id="937272"/>
<dbReference type="EnsemblBacteria" id="CAB14989">
    <property type="protein sequence ID" value="CAB14989"/>
    <property type="gene ID" value="BSU_30110"/>
</dbReference>
<dbReference type="GeneID" id="937272"/>
<dbReference type="KEGG" id="bsu:BSU30110"/>
<dbReference type="PATRIC" id="fig|224308.43.peg.3151"/>
<dbReference type="eggNOG" id="COG1653">
    <property type="taxonomic scope" value="Bacteria"/>
</dbReference>
<dbReference type="InParanoid" id="C0SP80"/>
<dbReference type="OrthoDB" id="2934145at2"/>
<dbReference type="BioCyc" id="BSUB:BSU30110-MONOMER"/>
<dbReference type="Proteomes" id="UP000001570">
    <property type="component" value="Chromosome"/>
</dbReference>
<dbReference type="GO" id="GO:0005886">
    <property type="term" value="C:plasma membrane"/>
    <property type="evidence" value="ECO:0007669"/>
    <property type="project" value="UniProtKB-SubCell"/>
</dbReference>
<dbReference type="PROSITE" id="PS51257">
    <property type="entry name" value="PROKAR_LIPOPROTEIN"/>
    <property type="match status" value="1"/>
</dbReference>
<organism>
    <name type="scientific">Bacillus subtilis (strain 168)</name>
    <dbReference type="NCBI Taxonomy" id="224308"/>
    <lineage>
        <taxon>Bacteria</taxon>
        <taxon>Bacillati</taxon>
        <taxon>Bacillota</taxon>
        <taxon>Bacilli</taxon>
        <taxon>Bacillales</taxon>
        <taxon>Bacillaceae</taxon>
        <taxon>Bacillus</taxon>
    </lineage>
</organism>
<proteinExistence type="evidence at transcript level"/>
<accession>C0SP80</accession>
<accession>O34875</accession>
<accession>Q795R5</accession>
<keyword id="KW-1003">Cell membrane</keyword>
<keyword id="KW-0449">Lipoprotein</keyword>
<keyword id="KW-0472">Membrane</keyword>
<keyword id="KW-0564">Palmitate</keyword>
<keyword id="KW-1185">Reference proteome</keyword>
<keyword id="KW-0732">Signal</keyword>
<sequence length="167" mass="18704">MTKRIRTALCVIVSVLFLASCSSRPDGMHVILFSDMQAGVQEKIKKAAEQNAGKVDIFPAFQEKLLTEITAHEGDVFIVPEDMFQAYDDPENFQPLNGLPPEKTSPYTTVNKKTGEKTIYAVQIEKGKKQLNGYSFQLNRDMAAFIPVYAEKTEEALQLISQLTEAR</sequence>